<comment type="function">
    <text evidence="1">Produces ATP from ADP in the presence of a proton gradient across the membrane.</text>
</comment>
<comment type="subunit">
    <text evidence="1">F-type ATPases have 2 components, CF(1) - the catalytic core - and CF(0) - the membrane proton channel. CF(1) has five subunits: alpha(3), beta(3), gamma(1), delta(1), epsilon(1). CF(0) has three main subunits: a, b and c.</text>
</comment>
<comment type="subcellular location">
    <subcellularLocation>
        <location evidence="1">Cell inner membrane</location>
        <topology evidence="1">Peripheral membrane protein</topology>
    </subcellularLocation>
</comment>
<comment type="similarity">
    <text evidence="1">Belongs to the ATPase epsilon chain family.</text>
</comment>
<proteinExistence type="inferred from homology"/>
<reference key="1">
    <citation type="submission" date="2008-05" db="EMBL/GenBank/DDBJ databases">
        <title>Genome sequence of Helicobacter pylori from the remote Amazon: traces of Asian ancestry of the first Americans.</title>
        <authorList>
            <person name="Kersulyte D."/>
            <person name="Kalia A."/>
            <person name="Gilman R.H."/>
            <person name="Berg D.E."/>
        </authorList>
    </citation>
    <scope>NUCLEOTIDE SEQUENCE [LARGE SCALE GENOMIC DNA]</scope>
    <source>
        <strain>Shi470</strain>
    </source>
</reference>
<evidence type="ECO:0000255" key="1">
    <source>
        <dbReference type="HAMAP-Rule" id="MF_00530"/>
    </source>
</evidence>
<dbReference type="EMBL" id="CP001072">
    <property type="protein sequence ID" value="ACD48571.1"/>
    <property type="molecule type" value="Genomic_DNA"/>
</dbReference>
<dbReference type="RefSeq" id="WP_001196322.1">
    <property type="nucleotide sequence ID" value="NC_010698.2"/>
</dbReference>
<dbReference type="SMR" id="B2UUN9"/>
<dbReference type="KEGG" id="hps:HPSH_05825"/>
<dbReference type="HOGENOM" id="CLU_084338_2_1_7"/>
<dbReference type="GO" id="GO:0005886">
    <property type="term" value="C:plasma membrane"/>
    <property type="evidence" value="ECO:0007669"/>
    <property type="project" value="UniProtKB-SubCell"/>
</dbReference>
<dbReference type="GO" id="GO:0045259">
    <property type="term" value="C:proton-transporting ATP synthase complex"/>
    <property type="evidence" value="ECO:0007669"/>
    <property type="project" value="UniProtKB-KW"/>
</dbReference>
<dbReference type="GO" id="GO:0005524">
    <property type="term" value="F:ATP binding"/>
    <property type="evidence" value="ECO:0007669"/>
    <property type="project" value="UniProtKB-UniRule"/>
</dbReference>
<dbReference type="GO" id="GO:0046933">
    <property type="term" value="F:proton-transporting ATP synthase activity, rotational mechanism"/>
    <property type="evidence" value="ECO:0007669"/>
    <property type="project" value="UniProtKB-UniRule"/>
</dbReference>
<dbReference type="CDD" id="cd12152">
    <property type="entry name" value="F1-ATPase_delta"/>
    <property type="match status" value="1"/>
</dbReference>
<dbReference type="FunFam" id="2.60.15.10:FF:000006">
    <property type="entry name" value="ATP synthase epsilon chain"/>
    <property type="match status" value="1"/>
</dbReference>
<dbReference type="Gene3D" id="2.60.15.10">
    <property type="entry name" value="F0F1 ATP synthase delta/epsilon subunit, N-terminal"/>
    <property type="match status" value="1"/>
</dbReference>
<dbReference type="HAMAP" id="MF_00530">
    <property type="entry name" value="ATP_synth_epsil_bac"/>
    <property type="match status" value="1"/>
</dbReference>
<dbReference type="InterPro" id="IPR001469">
    <property type="entry name" value="ATP_synth_F1_dsu/esu"/>
</dbReference>
<dbReference type="InterPro" id="IPR020546">
    <property type="entry name" value="ATP_synth_F1_dsu/esu_N"/>
</dbReference>
<dbReference type="InterPro" id="IPR036771">
    <property type="entry name" value="ATPsynth_dsu/esu_N"/>
</dbReference>
<dbReference type="NCBIfam" id="TIGR01216">
    <property type="entry name" value="ATP_synt_epsi"/>
    <property type="match status" value="1"/>
</dbReference>
<dbReference type="PANTHER" id="PTHR13822">
    <property type="entry name" value="ATP SYNTHASE DELTA/EPSILON CHAIN"/>
    <property type="match status" value="1"/>
</dbReference>
<dbReference type="PANTHER" id="PTHR13822:SF10">
    <property type="entry name" value="ATP SYNTHASE EPSILON CHAIN, CHLOROPLASTIC"/>
    <property type="match status" value="1"/>
</dbReference>
<dbReference type="Pfam" id="PF02823">
    <property type="entry name" value="ATP-synt_DE_N"/>
    <property type="match status" value="1"/>
</dbReference>
<dbReference type="SUPFAM" id="SSF51344">
    <property type="entry name" value="Epsilon subunit of F1F0-ATP synthase N-terminal domain"/>
    <property type="match status" value="1"/>
</dbReference>
<sequence>MALLKISVVVPEGEVYTGEVKSVVLPGVEGEFGVLYGHSNMITLLQAGVIEIETENQKEHIAINWGYAEVTKERVDILADGAVFIKKGSDDRDDAISRAKKLLEDASSDRLAVSSVLAKIESL</sequence>
<protein>
    <recommendedName>
        <fullName evidence="1">ATP synthase epsilon chain</fullName>
    </recommendedName>
    <alternativeName>
        <fullName evidence="1">ATP synthase F1 sector epsilon subunit</fullName>
    </alternativeName>
    <alternativeName>
        <fullName evidence="1">F-ATPase epsilon subunit</fullName>
    </alternativeName>
</protein>
<keyword id="KW-0066">ATP synthesis</keyword>
<keyword id="KW-0997">Cell inner membrane</keyword>
<keyword id="KW-1003">Cell membrane</keyword>
<keyword id="KW-0139">CF(1)</keyword>
<keyword id="KW-0375">Hydrogen ion transport</keyword>
<keyword id="KW-0406">Ion transport</keyword>
<keyword id="KW-0472">Membrane</keyword>
<keyword id="KW-0813">Transport</keyword>
<gene>
    <name evidence="1" type="primary">atpC</name>
    <name type="ordered locus">HPSH_05825</name>
</gene>
<feature type="chain" id="PRO_1000127865" description="ATP synthase epsilon chain">
    <location>
        <begin position="1"/>
        <end position="123"/>
    </location>
</feature>
<organism>
    <name type="scientific">Helicobacter pylori (strain Shi470)</name>
    <dbReference type="NCBI Taxonomy" id="512562"/>
    <lineage>
        <taxon>Bacteria</taxon>
        <taxon>Pseudomonadati</taxon>
        <taxon>Campylobacterota</taxon>
        <taxon>Epsilonproteobacteria</taxon>
        <taxon>Campylobacterales</taxon>
        <taxon>Helicobacteraceae</taxon>
        <taxon>Helicobacter</taxon>
    </lineage>
</organism>
<name>ATPE_HELPS</name>
<accession>B2UUN9</accession>